<name>Y7538_DICDI</name>
<feature type="signal peptide" evidence="1">
    <location>
        <begin position="1"/>
        <end position="24"/>
    </location>
</feature>
<feature type="chain" id="PRO_0000347017" description="Putative uncharacterized protein DDB_G0287599">
    <location>
        <begin position="25"/>
        <end position="117"/>
    </location>
</feature>
<feature type="region of interest" description="Disordered" evidence="2">
    <location>
        <begin position="42"/>
        <end position="117"/>
    </location>
</feature>
<feature type="compositionally biased region" description="Low complexity" evidence="2">
    <location>
        <begin position="46"/>
        <end position="95"/>
    </location>
</feature>
<feature type="compositionally biased region" description="Polar residues" evidence="2">
    <location>
        <begin position="96"/>
        <end position="110"/>
    </location>
</feature>
<feature type="glycosylation site" description="N-linked (GlcNAc...) asparagine" evidence="1">
    <location>
        <position position="61"/>
    </location>
</feature>
<feature type="glycosylation site" description="N-linked (GlcNAc...) asparagine" evidence="1">
    <location>
        <position position="72"/>
    </location>
</feature>
<sequence length="117" mass="13427">MMTEFGSAMTLVTGLVAYGAYVKSKRQSNHYLLKTNNNFDVEKENFNYNNNNNNNNNNNNNNSNNNDNNNNNNSNSNNNNNNNNNNNNNNNNNINDKQINGTNIFDSNNQIKRRLFD</sequence>
<reference key="1">
    <citation type="journal article" date="2005" name="Nature">
        <title>The genome of the social amoeba Dictyostelium discoideum.</title>
        <authorList>
            <person name="Eichinger L."/>
            <person name="Pachebat J.A."/>
            <person name="Gloeckner G."/>
            <person name="Rajandream M.A."/>
            <person name="Sucgang R."/>
            <person name="Berriman M."/>
            <person name="Song J."/>
            <person name="Olsen R."/>
            <person name="Szafranski K."/>
            <person name="Xu Q."/>
            <person name="Tunggal B."/>
            <person name="Kummerfeld S."/>
            <person name="Madera M."/>
            <person name="Konfortov B.A."/>
            <person name="Rivero F."/>
            <person name="Bankier A.T."/>
            <person name="Lehmann R."/>
            <person name="Hamlin N."/>
            <person name="Davies R."/>
            <person name="Gaudet P."/>
            <person name="Fey P."/>
            <person name="Pilcher K."/>
            <person name="Chen G."/>
            <person name="Saunders D."/>
            <person name="Sodergren E.J."/>
            <person name="Davis P."/>
            <person name="Kerhornou A."/>
            <person name="Nie X."/>
            <person name="Hall N."/>
            <person name="Anjard C."/>
            <person name="Hemphill L."/>
            <person name="Bason N."/>
            <person name="Farbrother P."/>
            <person name="Desany B."/>
            <person name="Just E."/>
            <person name="Morio T."/>
            <person name="Rost R."/>
            <person name="Churcher C.M."/>
            <person name="Cooper J."/>
            <person name="Haydock S."/>
            <person name="van Driessche N."/>
            <person name="Cronin A."/>
            <person name="Goodhead I."/>
            <person name="Muzny D.M."/>
            <person name="Mourier T."/>
            <person name="Pain A."/>
            <person name="Lu M."/>
            <person name="Harper D."/>
            <person name="Lindsay R."/>
            <person name="Hauser H."/>
            <person name="James K.D."/>
            <person name="Quiles M."/>
            <person name="Madan Babu M."/>
            <person name="Saito T."/>
            <person name="Buchrieser C."/>
            <person name="Wardroper A."/>
            <person name="Felder M."/>
            <person name="Thangavelu M."/>
            <person name="Johnson D."/>
            <person name="Knights A."/>
            <person name="Loulseged H."/>
            <person name="Mungall K.L."/>
            <person name="Oliver K."/>
            <person name="Price C."/>
            <person name="Quail M.A."/>
            <person name="Urushihara H."/>
            <person name="Hernandez J."/>
            <person name="Rabbinowitsch E."/>
            <person name="Steffen D."/>
            <person name="Sanders M."/>
            <person name="Ma J."/>
            <person name="Kohara Y."/>
            <person name="Sharp S."/>
            <person name="Simmonds M.N."/>
            <person name="Spiegler S."/>
            <person name="Tivey A."/>
            <person name="Sugano S."/>
            <person name="White B."/>
            <person name="Walker D."/>
            <person name="Woodward J.R."/>
            <person name="Winckler T."/>
            <person name="Tanaka Y."/>
            <person name="Shaulsky G."/>
            <person name="Schleicher M."/>
            <person name="Weinstock G.M."/>
            <person name="Rosenthal A."/>
            <person name="Cox E.C."/>
            <person name="Chisholm R.L."/>
            <person name="Gibbs R.A."/>
            <person name="Loomis W.F."/>
            <person name="Platzer M."/>
            <person name="Kay R.R."/>
            <person name="Williams J.G."/>
            <person name="Dear P.H."/>
            <person name="Noegel A.A."/>
            <person name="Barrell B.G."/>
            <person name="Kuspa A."/>
        </authorList>
    </citation>
    <scope>NUCLEOTIDE SEQUENCE [LARGE SCALE GENOMIC DNA]</scope>
    <source>
        <strain>AX4</strain>
    </source>
</reference>
<proteinExistence type="inferred from homology"/>
<gene>
    <name type="ORF">DDB_G0287599</name>
</gene>
<keyword id="KW-0325">Glycoprotein</keyword>
<keyword id="KW-1185">Reference proteome</keyword>
<keyword id="KW-0964">Secreted</keyword>
<keyword id="KW-0732">Signal</keyword>
<comment type="subcellular location">
    <subcellularLocation>
        <location evidence="3">Secreted</location>
    </subcellularLocation>
</comment>
<comment type="sequence caution" evidence="3">
    <conflict type="erroneous gene model prediction">
        <sequence resource="EMBL-CDS" id="EAL63608"/>
    </conflict>
</comment>
<organism>
    <name type="scientific">Dictyostelium discoideum</name>
    <name type="common">Social amoeba</name>
    <dbReference type="NCBI Taxonomy" id="44689"/>
    <lineage>
        <taxon>Eukaryota</taxon>
        <taxon>Amoebozoa</taxon>
        <taxon>Evosea</taxon>
        <taxon>Eumycetozoa</taxon>
        <taxon>Dictyostelia</taxon>
        <taxon>Dictyosteliales</taxon>
        <taxon>Dictyosteliaceae</taxon>
        <taxon>Dictyostelium</taxon>
    </lineage>
</organism>
<dbReference type="EMBL" id="AAFI02000103">
    <property type="protein sequence ID" value="EAL63608.1"/>
    <property type="status" value="ALT_SEQ"/>
    <property type="molecule type" value="Genomic_DNA"/>
</dbReference>
<dbReference type="RefSeq" id="XP_637110.1">
    <property type="nucleotide sequence ID" value="XM_632018.1"/>
</dbReference>
<dbReference type="GlyGen" id="Q54K54">
    <property type="glycosylation" value="2 sites"/>
</dbReference>
<dbReference type="PaxDb" id="44689-DDB0187538"/>
<dbReference type="EnsemblProtists" id="EAL63608">
    <property type="protein sequence ID" value="EAL63608"/>
    <property type="gene ID" value="DDB_G0287599"/>
</dbReference>
<dbReference type="GeneID" id="8626205"/>
<dbReference type="KEGG" id="ddi:DDB_G0287599"/>
<dbReference type="dictyBase" id="DDB_G0287599"/>
<dbReference type="VEuPathDB" id="AmoebaDB:DDB_G0287599"/>
<dbReference type="InParanoid" id="Q54K54"/>
<dbReference type="PRO" id="PR:Q54K54"/>
<dbReference type="Proteomes" id="UP000002195">
    <property type="component" value="Chromosome 5"/>
</dbReference>
<dbReference type="GO" id="GO:0005576">
    <property type="term" value="C:extracellular region"/>
    <property type="evidence" value="ECO:0007669"/>
    <property type="project" value="UniProtKB-SubCell"/>
</dbReference>
<accession>Q54K54</accession>
<evidence type="ECO:0000255" key="1"/>
<evidence type="ECO:0000256" key="2">
    <source>
        <dbReference type="SAM" id="MobiDB-lite"/>
    </source>
</evidence>
<evidence type="ECO:0000305" key="3"/>
<protein>
    <recommendedName>
        <fullName>Putative uncharacterized protein DDB_G0287599</fullName>
    </recommendedName>
</protein>